<evidence type="ECO:0000255" key="1">
    <source>
        <dbReference type="HAMAP-Rule" id="MF_01363"/>
    </source>
</evidence>
<evidence type="ECO:0000269" key="2">
    <source>
    </source>
</evidence>
<evidence type="ECO:0000305" key="3"/>
<evidence type="ECO:0007829" key="4">
    <source>
        <dbReference type="PDB" id="5O60"/>
    </source>
</evidence>
<evidence type="ECO:0007829" key="5">
    <source>
        <dbReference type="PDB" id="5XYM"/>
    </source>
</evidence>
<name>RL21_MYCS2</name>
<organism>
    <name type="scientific">Mycolicibacterium smegmatis (strain ATCC 700084 / mc(2)155)</name>
    <name type="common">Mycobacterium smegmatis</name>
    <dbReference type="NCBI Taxonomy" id="246196"/>
    <lineage>
        <taxon>Bacteria</taxon>
        <taxon>Bacillati</taxon>
        <taxon>Actinomycetota</taxon>
        <taxon>Actinomycetes</taxon>
        <taxon>Mycobacteriales</taxon>
        <taxon>Mycobacteriaceae</taxon>
        <taxon>Mycolicibacterium</taxon>
    </lineage>
</organism>
<feature type="initiator methionine" description="Removed" evidence="2">
    <location>
        <position position="1"/>
    </location>
</feature>
<feature type="chain" id="PRO_1000067857" description="Large ribosomal subunit protein bL21">
    <location>
        <begin position="2"/>
        <end position="103"/>
    </location>
</feature>
<feature type="strand" evidence="5">
    <location>
        <begin position="4"/>
        <end position="19"/>
    </location>
</feature>
<feature type="strand" evidence="5">
    <location>
        <begin position="22"/>
        <end position="25"/>
    </location>
</feature>
<feature type="strand" evidence="5">
    <location>
        <begin position="34"/>
        <end position="37"/>
    </location>
</feature>
<feature type="strand" evidence="5">
    <location>
        <begin position="39"/>
        <end position="46"/>
    </location>
</feature>
<feature type="strand" evidence="4">
    <location>
        <begin position="47"/>
        <end position="49"/>
    </location>
</feature>
<feature type="helix" evidence="5">
    <location>
        <begin position="52"/>
        <end position="55"/>
    </location>
</feature>
<feature type="strand" evidence="5">
    <location>
        <begin position="60"/>
        <end position="69"/>
    </location>
</feature>
<feature type="strand" evidence="5">
    <location>
        <begin position="73"/>
        <end position="78"/>
    </location>
</feature>
<feature type="turn" evidence="4">
    <location>
        <begin position="80"/>
        <end position="83"/>
    </location>
</feature>
<feature type="strand" evidence="5">
    <location>
        <begin position="85"/>
        <end position="90"/>
    </location>
</feature>
<feature type="strand" evidence="5">
    <location>
        <begin position="93"/>
        <end position="97"/>
    </location>
</feature>
<sequence length="103" mass="11034">MATYAIVKTGGKQYKVAAGDVVKVEKLDSEPGASVSLPVALVVDGANVTSKADDLAKVAVTAEVLEHTKGPKIRIHKFKNKTGYHKRQGHRQQLTVLKVTGIK</sequence>
<dbReference type="EMBL" id="CP000480">
    <property type="protein sequence ID" value="ABK75887.1"/>
    <property type="molecule type" value="Genomic_DNA"/>
</dbReference>
<dbReference type="EMBL" id="CP001663">
    <property type="protein sequence ID" value="AFP40962.1"/>
    <property type="molecule type" value="Genomic_DNA"/>
</dbReference>
<dbReference type="RefSeq" id="WP_003896002.1">
    <property type="nucleotide sequence ID" value="NZ_SIJM01000004.1"/>
</dbReference>
<dbReference type="RefSeq" id="YP_888889.1">
    <property type="nucleotide sequence ID" value="NC_008596.1"/>
</dbReference>
<dbReference type="PDB" id="5O60">
    <property type="method" value="EM"/>
    <property type="resolution" value="3.20 A"/>
    <property type="chains" value="S=1-103"/>
</dbReference>
<dbReference type="PDB" id="5O61">
    <property type="method" value="EM"/>
    <property type="resolution" value="3.31 A"/>
    <property type="chains" value="S=1-103"/>
</dbReference>
<dbReference type="PDB" id="5XYM">
    <property type="method" value="EM"/>
    <property type="resolution" value="3.08 A"/>
    <property type="chains" value="R=1-103"/>
</dbReference>
<dbReference type="PDB" id="5ZEB">
    <property type="method" value="EM"/>
    <property type="resolution" value="3.40 A"/>
    <property type="chains" value="S=1-103"/>
</dbReference>
<dbReference type="PDB" id="5ZEP">
    <property type="method" value="EM"/>
    <property type="resolution" value="3.40 A"/>
    <property type="chains" value="S=1-103"/>
</dbReference>
<dbReference type="PDB" id="5ZET">
    <property type="method" value="EM"/>
    <property type="resolution" value="3.20 A"/>
    <property type="chains" value="S=1-103"/>
</dbReference>
<dbReference type="PDB" id="6DZI">
    <property type="method" value="EM"/>
    <property type="resolution" value="3.46 A"/>
    <property type="chains" value="S=3-102"/>
</dbReference>
<dbReference type="PDB" id="6DZP">
    <property type="method" value="EM"/>
    <property type="resolution" value="3.42 A"/>
    <property type="chains" value="S=2-103"/>
</dbReference>
<dbReference type="PDB" id="7S0S">
    <property type="method" value="EM"/>
    <property type="resolution" value="3.05 A"/>
    <property type="chains" value="T=3-102"/>
</dbReference>
<dbReference type="PDB" id="7XAM">
    <property type="method" value="EM"/>
    <property type="resolution" value="2.80 A"/>
    <property type="chains" value="S=1-103"/>
</dbReference>
<dbReference type="PDB" id="7Y41">
    <property type="method" value="EM"/>
    <property type="resolution" value="4.10 A"/>
    <property type="chains" value="S=1-103"/>
</dbReference>
<dbReference type="PDB" id="8FR8">
    <property type="method" value="EM"/>
    <property type="resolution" value="2.76 A"/>
    <property type="chains" value="X=3-102"/>
</dbReference>
<dbReference type="PDB" id="8KAB">
    <property type="method" value="EM"/>
    <property type="resolution" value="3.30 A"/>
    <property type="chains" value="S=1-103"/>
</dbReference>
<dbReference type="PDB" id="8V9J">
    <property type="method" value="EM"/>
    <property type="resolution" value="3.10 A"/>
    <property type="chains" value="T=1-103"/>
</dbReference>
<dbReference type="PDB" id="8V9K">
    <property type="method" value="EM"/>
    <property type="resolution" value="3.10 A"/>
    <property type="chains" value="T=1-103"/>
</dbReference>
<dbReference type="PDB" id="8V9L">
    <property type="method" value="EM"/>
    <property type="resolution" value="3.00 A"/>
    <property type="chains" value="T=1-103"/>
</dbReference>
<dbReference type="PDB" id="8VIO">
    <property type="method" value="EM"/>
    <property type="resolution" value="3.26 A"/>
    <property type="chains" value="S=1-103"/>
</dbReference>
<dbReference type="PDB" id="8VK0">
    <property type="method" value="EM"/>
    <property type="resolution" value="3.14 A"/>
    <property type="chains" value="S=1-103"/>
</dbReference>
<dbReference type="PDB" id="8VK7">
    <property type="method" value="EM"/>
    <property type="resolution" value="3.09 A"/>
    <property type="chains" value="S=1-103"/>
</dbReference>
<dbReference type="PDB" id="8VKI">
    <property type="method" value="EM"/>
    <property type="resolution" value="2.96 A"/>
    <property type="chains" value="S=1-103"/>
</dbReference>
<dbReference type="PDB" id="8VKW">
    <property type="method" value="EM"/>
    <property type="resolution" value="3.44 A"/>
    <property type="chains" value="S=1-103"/>
</dbReference>
<dbReference type="PDB" id="8VR4">
    <property type="method" value="EM"/>
    <property type="resolution" value="2.80 A"/>
    <property type="chains" value="S=1-103"/>
</dbReference>
<dbReference type="PDB" id="8VR8">
    <property type="method" value="EM"/>
    <property type="resolution" value="3.25 A"/>
    <property type="chains" value="S=1-103"/>
</dbReference>
<dbReference type="PDB" id="8VRL">
    <property type="method" value="EM"/>
    <property type="resolution" value="3.33 A"/>
    <property type="chains" value="S=1-103"/>
</dbReference>
<dbReference type="PDB" id="8WHX">
    <property type="method" value="EM"/>
    <property type="resolution" value="2.80 A"/>
    <property type="chains" value="U=1-103"/>
</dbReference>
<dbReference type="PDB" id="8WHY">
    <property type="method" value="EM"/>
    <property type="resolution" value="2.70 A"/>
    <property type="chains" value="U=1-103"/>
</dbReference>
<dbReference type="PDB" id="8WI7">
    <property type="method" value="EM"/>
    <property type="resolution" value="3.50 A"/>
    <property type="chains" value="U=1-103"/>
</dbReference>
<dbReference type="PDB" id="8WI8">
    <property type="method" value="EM"/>
    <property type="resolution" value="2.70 A"/>
    <property type="chains" value="U=1-103"/>
</dbReference>
<dbReference type="PDB" id="8WIB">
    <property type="method" value="EM"/>
    <property type="resolution" value="3.50 A"/>
    <property type="chains" value="U=1-103"/>
</dbReference>
<dbReference type="PDB" id="8WIC">
    <property type="method" value="EM"/>
    <property type="resolution" value="3.50 A"/>
    <property type="chains" value="U=1-103"/>
</dbReference>
<dbReference type="PDB" id="8XZ3">
    <property type="method" value="EM"/>
    <property type="resolution" value="3.60 A"/>
    <property type="chains" value="S=3-102"/>
</dbReference>
<dbReference type="PDBsum" id="5O60"/>
<dbReference type="PDBsum" id="5O61"/>
<dbReference type="PDBsum" id="5XYM"/>
<dbReference type="PDBsum" id="5ZEB"/>
<dbReference type="PDBsum" id="5ZEP"/>
<dbReference type="PDBsum" id="5ZET"/>
<dbReference type="PDBsum" id="6DZI"/>
<dbReference type="PDBsum" id="6DZP"/>
<dbReference type="PDBsum" id="7S0S"/>
<dbReference type="PDBsum" id="7XAM"/>
<dbReference type="PDBsum" id="7Y41"/>
<dbReference type="PDBsum" id="8FR8"/>
<dbReference type="PDBsum" id="8KAB"/>
<dbReference type="PDBsum" id="8V9J"/>
<dbReference type="PDBsum" id="8V9K"/>
<dbReference type="PDBsum" id="8V9L"/>
<dbReference type="PDBsum" id="8VIO"/>
<dbReference type="PDBsum" id="8VK0"/>
<dbReference type="PDBsum" id="8VK7"/>
<dbReference type="PDBsum" id="8VKI"/>
<dbReference type="PDBsum" id="8VKW"/>
<dbReference type="PDBsum" id="8VR4"/>
<dbReference type="PDBsum" id="8VR8"/>
<dbReference type="PDBsum" id="8VRL"/>
<dbReference type="PDBsum" id="8WHX"/>
<dbReference type="PDBsum" id="8WHY"/>
<dbReference type="PDBsum" id="8WI7"/>
<dbReference type="PDBsum" id="8WI8"/>
<dbReference type="PDBsum" id="8WIB"/>
<dbReference type="PDBsum" id="8WIC"/>
<dbReference type="PDBsum" id="8XZ3"/>
<dbReference type="EMDB" id="EMD-29397"/>
<dbReference type="EMDB" id="EMD-33096"/>
<dbReference type="EMDB" id="EMD-33599"/>
<dbReference type="EMDB" id="EMD-37007"/>
<dbReference type="EMDB" id="EMD-3750"/>
<dbReference type="EMDB" id="EMD-3751"/>
<dbReference type="EMDB" id="EMD-37551"/>
<dbReference type="EMDB" id="EMD-37552"/>
<dbReference type="EMDB" id="EMD-37559"/>
<dbReference type="EMDB" id="EMD-37560"/>
<dbReference type="EMDB" id="EMD-37562"/>
<dbReference type="EMDB" id="EMD-37563"/>
<dbReference type="EMDB" id="EMD-38788"/>
<dbReference type="EMDB" id="EMD-43074"/>
<dbReference type="EMDB" id="EMD-43075"/>
<dbReference type="EMDB" id="EMD-43076"/>
<dbReference type="EMDB" id="EMD-43267"/>
<dbReference type="EMDB" id="EMD-43294"/>
<dbReference type="EMDB" id="EMD-43305"/>
<dbReference type="EMDB" id="EMD-43317"/>
<dbReference type="EMDB" id="EMD-43333"/>
<dbReference type="EMDB" id="EMD-43476"/>
<dbReference type="EMDB" id="EMD-43477"/>
<dbReference type="EMDB" id="EMD-43484"/>
<dbReference type="EMDB" id="EMD-6789"/>
<dbReference type="EMDB" id="EMD-6920"/>
<dbReference type="EMDB" id="EMD-6921"/>
<dbReference type="EMDB" id="EMD-6922"/>
<dbReference type="EMDB" id="EMD-8932"/>
<dbReference type="EMDB" id="EMD-8937"/>
<dbReference type="SMR" id="A0R151"/>
<dbReference type="IntAct" id="A0R151">
    <property type="interactions" value="2"/>
</dbReference>
<dbReference type="STRING" id="246196.MSMEG_4625"/>
<dbReference type="PaxDb" id="246196-MSMEI_4508"/>
<dbReference type="GeneID" id="93459314"/>
<dbReference type="KEGG" id="msb:LJ00_22875"/>
<dbReference type="KEGG" id="msg:MSMEI_4508"/>
<dbReference type="KEGG" id="msm:MSMEG_4625"/>
<dbReference type="PATRIC" id="fig|246196.19.peg.4520"/>
<dbReference type="eggNOG" id="COG0261">
    <property type="taxonomic scope" value="Bacteria"/>
</dbReference>
<dbReference type="OrthoDB" id="9813334at2"/>
<dbReference type="Proteomes" id="UP000000757">
    <property type="component" value="Chromosome"/>
</dbReference>
<dbReference type="Proteomes" id="UP000006158">
    <property type="component" value="Chromosome"/>
</dbReference>
<dbReference type="GO" id="GO:0005737">
    <property type="term" value="C:cytoplasm"/>
    <property type="evidence" value="ECO:0007669"/>
    <property type="project" value="UniProtKB-ARBA"/>
</dbReference>
<dbReference type="GO" id="GO:1990904">
    <property type="term" value="C:ribonucleoprotein complex"/>
    <property type="evidence" value="ECO:0007669"/>
    <property type="project" value="UniProtKB-KW"/>
</dbReference>
<dbReference type="GO" id="GO:0005840">
    <property type="term" value="C:ribosome"/>
    <property type="evidence" value="ECO:0007669"/>
    <property type="project" value="UniProtKB-KW"/>
</dbReference>
<dbReference type="GO" id="GO:0019843">
    <property type="term" value="F:rRNA binding"/>
    <property type="evidence" value="ECO:0007669"/>
    <property type="project" value="UniProtKB-UniRule"/>
</dbReference>
<dbReference type="GO" id="GO:0003735">
    <property type="term" value="F:structural constituent of ribosome"/>
    <property type="evidence" value="ECO:0007669"/>
    <property type="project" value="InterPro"/>
</dbReference>
<dbReference type="GO" id="GO:0006412">
    <property type="term" value="P:translation"/>
    <property type="evidence" value="ECO:0007669"/>
    <property type="project" value="UniProtKB-UniRule"/>
</dbReference>
<dbReference type="HAMAP" id="MF_01363">
    <property type="entry name" value="Ribosomal_bL21"/>
    <property type="match status" value="1"/>
</dbReference>
<dbReference type="InterPro" id="IPR028909">
    <property type="entry name" value="bL21-like"/>
</dbReference>
<dbReference type="InterPro" id="IPR036164">
    <property type="entry name" value="bL21-like_sf"/>
</dbReference>
<dbReference type="InterPro" id="IPR001787">
    <property type="entry name" value="Ribosomal_bL21"/>
</dbReference>
<dbReference type="InterPro" id="IPR018258">
    <property type="entry name" value="Ribosomal_bL21_CS"/>
</dbReference>
<dbReference type="NCBIfam" id="TIGR00061">
    <property type="entry name" value="L21"/>
    <property type="match status" value="1"/>
</dbReference>
<dbReference type="PANTHER" id="PTHR21349">
    <property type="entry name" value="50S RIBOSOMAL PROTEIN L21"/>
    <property type="match status" value="1"/>
</dbReference>
<dbReference type="PANTHER" id="PTHR21349:SF0">
    <property type="entry name" value="LARGE RIBOSOMAL SUBUNIT PROTEIN BL21M"/>
    <property type="match status" value="1"/>
</dbReference>
<dbReference type="Pfam" id="PF00829">
    <property type="entry name" value="Ribosomal_L21p"/>
    <property type="match status" value="1"/>
</dbReference>
<dbReference type="SUPFAM" id="SSF141091">
    <property type="entry name" value="L21p-like"/>
    <property type="match status" value="1"/>
</dbReference>
<dbReference type="PROSITE" id="PS01169">
    <property type="entry name" value="RIBOSOMAL_L21"/>
    <property type="match status" value="1"/>
</dbReference>
<accession>A0R151</accession>
<accession>I7G5N4</accession>
<gene>
    <name evidence="1" type="primary">rplU</name>
    <name type="ordered locus">MSMEG_4625</name>
    <name type="ordered locus">MSMEI_4508</name>
</gene>
<proteinExistence type="evidence at protein level"/>
<reference key="1">
    <citation type="submission" date="2006-10" db="EMBL/GenBank/DDBJ databases">
        <authorList>
            <person name="Fleischmann R.D."/>
            <person name="Dodson R.J."/>
            <person name="Haft D.H."/>
            <person name="Merkel J.S."/>
            <person name="Nelson W.C."/>
            <person name="Fraser C.M."/>
        </authorList>
    </citation>
    <scope>NUCLEOTIDE SEQUENCE [LARGE SCALE GENOMIC DNA]</scope>
    <source>
        <strain>ATCC 700084 / mc(2)155</strain>
    </source>
</reference>
<reference key="2">
    <citation type="journal article" date="2007" name="Genome Biol.">
        <title>Interrupted coding sequences in Mycobacterium smegmatis: authentic mutations or sequencing errors?</title>
        <authorList>
            <person name="Deshayes C."/>
            <person name="Perrodou E."/>
            <person name="Gallien S."/>
            <person name="Euphrasie D."/>
            <person name="Schaeffer C."/>
            <person name="Van-Dorsselaer A."/>
            <person name="Poch O."/>
            <person name="Lecompte O."/>
            <person name="Reyrat J.-M."/>
        </authorList>
    </citation>
    <scope>NUCLEOTIDE SEQUENCE [LARGE SCALE GENOMIC DNA]</scope>
    <source>
        <strain>ATCC 700084 / mc(2)155</strain>
    </source>
</reference>
<reference key="3">
    <citation type="journal article" date="2009" name="Genome Res.">
        <title>Ortho-proteogenomics: multiple proteomes investigation through orthology and a new MS-based protocol.</title>
        <authorList>
            <person name="Gallien S."/>
            <person name="Perrodou E."/>
            <person name="Carapito C."/>
            <person name="Deshayes C."/>
            <person name="Reyrat J.-M."/>
            <person name="Van Dorsselaer A."/>
            <person name="Poch O."/>
            <person name="Schaeffer C."/>
            <person name="Lecompte O."/>
        </authorList>
    </citation>
    <scope>NUCLEOTIDE SEQUENCE [LARGE SCALE GENOMIC DNA]</scope>
    <scope>IDENTIFICATION BY MASS SPECTROMETRY [LARGE SCALE ANALYSIS]</scope>
    <scope>CLEAVAGE OF INITIATOR METHIONINE</scope>
    <source>
        <strain>ATCC 700084 / mc(2)155</strain>
    </source>
</reference>
<protein>
    <recommendedName>
        <fullName evidence="1">Large ribosomal subunit protein bL21</fullName>
    </recommendedName>
    <alternativeName>
        <fullName evidence="3">50S ribosomal protein L21</fullName>
    </alternativeName>
</protein>
<keyword id="KW-0002">3D-structure</keyword>
<keyword id="KW-1185">Reference proteome</keyword>
<keyword id="KW-0687">Ribonucleoprotein</keyword>
<keyword id="KW-0689">Ribosomal protein</keyword>
<keyword id="KW-0694">RNA-binding</keyword>
<keyword id="KW-0699">rRNA-binding</keyword>
<comment type="function">
    <text evidence="1">This protein binds to 23S rRNA in the presence of protein L20.</text>
</comment>
<comment type="subunit">
    <text evidence="1">Part of the 50S ribosomal subunit. Contacts protein L20.</text>
</comment>
<comment type="similarity">
    <text evidence="1">Belongs to the bacterial ribosomal protein bL21 family.</text>
</comment>